<evidence type="ECO:0000255" key="1">
    <source>
        <dbReference type="HAMAP-Rule" id="MF_01208"/>
    </source>
</evidence>
<name>PYRE_RHOPA</name>
<accession>Q6N0N8</accession>
<protein>
    <recommendedName>
        <fullName evidence="1">Orotate phosphoribosyltransferase</fullName>
        <shortName evidence="1">OPRT</shortName>
        <shortName evidence="1">OPRTase</shortName>
        <ecNumber evidence="1">2.4.2.10</ecNumber>
    </recommendedName>
</protein>
<proteinExistence type="inferred from homology"/>
<dbReference type="EC" id="2.4.2.10" evidence="1"/>
<dbReference type="EMBL" id="BX572608">
    <property type="protein sequence ID" value="CAE30164.1"/>
    <property type="molecule type" value="Genomic_DNA"/>
</dbReference>
<dbReference type="RefSeq" id="WP_011160256.1">
    <property type="nucleotide sequence ID" value="NZ_CP116810.1"/>
</dbReference>
<dbReference type="SMR" id="Q6N0N8"/>
<dbReference type="STRING" id="258594.RPA4724"/>
<dbReference type="GeneID" id="66895883"/>
<dbReference type="eggNOG" id="COG0461">
    <property type="taxonomic scope" value="Bacteria"/>
</dbReference>
<dbReference type="HOGENOM" id="CLU_074878_2_1_5"/>
<dbReference type="PhylomeDB" id="Q6N0N8"/>
<dbReference type="UniPathway" id="UPA00070">
    <property type="reaction ID" value="UER00119"/>
</dbReference>
<dbReference type="GO" id="GO:0000287">
    <property type="term" value="F:magnesium ion binding"/>
    <property type="evidence" value="ECO:0007669"/>
    <property type="project" value="UniProtKB-UniRule"/>
</dbReference>
<dbReference type="GO" id="GO:0004588">
    <property type="term" value="F:orotate phosphoribosyltransferase activity"/>
    <property type="evidence" value="ECO:0007669"/>
    <property type="project" value="UniProtKB-UniRule"/>
</dbReference>
<dbReference type="GO" id="GO:0044205">
    <property type="term" value="P:'de novo' UMP biosynthetic process"/>
    <property type="evidence" value="ECO:0007669"/>
    <property type="project" value="UniProtKB-UniRule"/>
</dbReference>
<dbReference type="GO" id="GO:0019856">
    <property type="term" value="P:pyrimidine nucleobase biosynthetic process"/>
    <property type="evidence" value="ECO:0007669"/>
    <property type="project" value="TreeGrafter"/>
</dbReference>
<dbReference type="CDD" id="cd06223">
    <property type="entry name" value="PRTases_typeI"/>
    <property type="match status" value="1"/>
</dbReference>
<dbReference type="FunFam" id="3.40.50.2020:FF:000029">
    <property type="entry name" value="Orotate phosphoribosyltransferase"/>
    <property type="match status" value="1"/>
</dbReference>
<dbReference type="Gene3D" id="3.40.50.2020">
    <property type="match status" value="1"/>
</dbReference>
<dbReference type="HAMAP" id="MF_01208">
    <property type="entry name" value="PyrE"/>
    <property type="match status" value="1"/>
</dbReference>
<dbReference type="InterPro" id="IPR023031">
    <property type="entry name" value="OPRT"/>
</dbReference>
<dbReference type="InterPro" id="IPR004467">
    <property type="entry name" value="Or_phspho_trans_dom"/>
</dbReference>
<dbReference type="InterPro" id="IPR000836">
    <property type="entry name" value="PRibTrfase_dom"/>
</dbReference>
<dbReference type="InterPro" id="IPR029057">
    <property type="entry name" value="PRTase-like"/>
</dbReference>
<dbReference type="NCBIfam" id="TIGR00336">
    <property type="entry name" value="pyrE"/>
    <property type="match status" value="1"/>
</dbReference>
<dbReference type="PANTHER" id="PTHR19278">
    <property type="entry name" value="OROTATE PHOSPHORIBOSYLTRANSFERASE"/>
    <property type="match status" value="1"/>
</dbReference>
<dbReference type="PANTHER" id="PTHR19278:SF9">
    <property type="entry name" value="URIDINE 5'-MONOPHOSPHATE SYNTHASE"/>
    <property type="match status" value="1"/>
</dbReference>
<dbReference type="Pfam" id="PF00156">
    <property type="entry name" value="Pribosyltran"/>
    <property type="match status" value="1"/>
</dbReference>
<dbReference type="SUPFAM" id="SSF53271">
    <property type="entry name" value="PRTase-like"/>
    <property type="match status" value="1"/>
</dbReference>
<feature type="chain" id="PRO_1000066283" description="Orotate phosphoribosyltransferase">
    <location>
        <begin position="1"/>
        <end position="187"/>
    </location>
</feature>
<feature type="binding site" evidence="1">
    <location>
        <position position="98"/>
    </location>
    <ligand>
        <name>5-phospho-alpha-D-ribose 1-diphosphate</name>
        <dbReference type="ChEBI" id="CHEBI:58017"/>
        <note>ligand shared between dimeric partners</note>
    </ligand>
</feature>
<feature type="binding site" description="in other chain" evidence="1">
    <location>
        <position position="99"/>
    </location>
    <ligand>
        <name>5-phospho-alpha-D-ribose 1-diphosphate</name>
        <dbReference type="ChEBI" id="CHEBI:58017"/>
        <note>ligand shared between dimeric partners</note>
    </ligand>
</feature>
<feature type="binding site" evidence="1">
    <location>
        <position position="102"/>
    </location>
    <ligand>
        <name>5-phospho-alpha-D-ribose 1-diphosphate</name>
        <dbReference type="ChEBI" id="CHEBI:58017"/>
        <note>ligand shared between dimeric partners</note>
    </ligand>
</feature>
<feature type="binding site" evidence="1">
    <location>
        <position position="104"/>
    </location>
    <ligand>
        <name>5-phospho-alpha-D-ribose 1-diphosphate</name>
        <dbReference type="ChEBI" id="CHEBI:58017"/>
        <note>ligand shared between dimeric partners</note>
    </ligand>
</feature>
<feature type="binding site" description="in other chain" evidence="1">
    <location>
        <begin position="128"/>
        <end position="136"/>
    </location>
    <ligand>
        <name>5-phospho-alpha-D-ribose 1-diphosphate</name>
        <dbReference type="ChEBI" id="CHEBI:58017"/>
        <note>ligand shared between dimeric partners</note>
    </ligand>
</feature>
<feature type="binding site" evidence="1">
    <location>
        <position position="132"/>
    </location>
    <ligand>
        <name>orotate</name>
        <dbReference type="ChEBI" id="CHEBI:30839"/>
    </ligand>
</feature>
<feature type="binding site" evidence="1">
    <location>
        <position position="160"/>
    </location>
    <ligand>
        <name>orotate</name>
        <dbReference type="ChEBI" id="CHEBI:30839"/>
    </ligand>
</feature>
<keyword id="KW-0328">Glycosyltransferase</keyword>
<keyword id="KW-0460">Magnesium</keyword>
<keyword id="KW-0665">Pyrimidine biosynthesis</keyword>
<keyword id="KW-0808">Transferase</keyword>
<reference key="1">
    <citation type="journal article" date="2004" name="Nat. Biotechnol.">
        <title>Complete genome sequence of the metabolically versatile photosynthetic bacterium Rhodopseudomonas palustris.</title>
        <authorList>
            <person name="Larimer F.W."/>
            <person name="Chain P."/>
            <person name="Hauser L."/>
            <person name="Lamerdin J.E."/>
            <person name="Malfatti S."/>
            <person name="Do L."/>
            <person name="Land M.L."/>
            <person name="Pelletier D.A."/>
            <person name="Beatty J.T."/>
            <person name="Lang A.S."/>
            <person name="Tabita F.R."/>
            <person name="Gibson J.L."/>
            <person name="Hanson T.E."/>
            <person name="Bobst C."/>
            <person name="Torres y Torres J.L."/>
            <person name="Peres C."/>
            <person name="Harrison F.H."/>
            <person name="Gibson J."/>
            <person name="Harwood C.S."/>
        </authorList>
    </citation>
    <scope>NUCLEOTIDE SEQUENCE [LARGE SCALE GENOMIC DNA]</scope>
    <source>
        <strain>ATCC BAA-98 / CGA009</strain>
    </source>
</reference>
<comment type="function">
    <text evidence="1">Catalyzes the transfer of a ribosyl phosphate group from 5-phosphoribose 1-diphosphate to orotate, leading to the formation of orotidine monophosphate (OMP).</text>
</comment>
<comment type="catalytic activity">
    <reaction evidence="1">
        <text>orotidine 5'-phosphate + diphosphate = orotate + 5-phospho-alpha-D-ribose 1-diphosphate</text>
        <dbReference type="Rhea" id="RHEA:10380"/>
        <dbReference type="ChEBI" id="CHEBI:30839"/>
        <dbReference type="ChEBI" id="CHEBI:33019"/>
        <dbReference type="ChEBI" id="CHEBI:57538"/>
        <dbReference type="ChEBI" id="CHEBI:58017"/>
        <dbReference type="EC" id="2.4.2.10"/>
    </reaction>
</comment>
<comment type="cofactor">
    <cofactor evidence="1">
        <name>Mg(2+)</name>
        <dbReference type="ChEBI" id="CHEBI:18420"/>
    </cofactor>
</comment>
<comment type="pathway">
    <text evidence="1">Pyrimidine metabolism; UMP biosynthesis via de novo pathway; UMP from orotate: step 1/2.</text>
</comment>
<comment type="subunit">
    <text evidence="1">Homodimer.</text>
</comment>
<comment type="similarity">
    <text evidence="1">Belongs to the purine/pyrimidine phosphoribosyltransferase family. PyrE subfamily.</text>
</comment>
<organism>
    <name type="scientific">Rhodopseudomonas palustris (strain ATCC BAA-98 / CGA009)</name>
    <dbReference type="NCBI Taxonomy" id="258594"/>
    <lineage>
        <taxon>Bacteria</taxon>
        <taxon>Pseudomonadati</taxon>
        <taxon>Pseudomonadota</taxon>
        <taxon>Alphaproteobacteria</taxon>
        <taxon>Hyphomicrobiales</taxon>
        <taxon>Nitrobacteraceae</taxon>
        <taxon>Rhodopseudomonas</taxon>
    </lineage>
</organism>
<sequence length="187" mass="20066">MSKSASRARLADIIRTRSFGRGEITLASGRKSDFYFNLKPTMLDPEGAALLAELTYETLRDEKVDYVGGLEMGAVPLAGAIAQLSWLKNHPISAFFVRKKPKEHGARLSVEGLAKGESLAGKRCVIVEDVTTTGGSAIKAVEAVKESGAEIVLVLTMVDREEGATEAFAAAGLPFRSLYKASEFLNT</sequence>
<gene>
    <name evidence="1" type="primary">pyrE</name>
    <name type="ordered locus">RPA4724</name>
</gene>